<proteinExistence type="evidence at protein level"/>
<dbReference type="EMBL" id="DQ115392">
    <property type="protein sequence ID" value="AAZ22495.1"/>
    <property type="molecule type" value="Genomic_DNA"/>
</dbReference>
<dbReference type="EMBL" id="Z38059">
    <property type="protein sequence ID" value="CAA86146.1"/>
    <property type="molecule type" value="Genomic_DNA"/>
</dbReference>
<dbReference type="EMBL" id="BK006942">
    <property type="protein sequence ID" value="DAA08421.1"/>
    <property type="molecule type" value="Genomic_DNA"/>
</dbReference>
<dbReference type="PIR" id="S48402">
    <property type="entry name" value="S48402"/>
</dbReference>
<dbReference type="RefSeq" id="NP_012134.1">
    <property type="nucleotide sequence ID" value="NM_001179480.1"/>
</dbReference>
<dbReference type="PDB" id="3VU9">
    <property type="method" value="X-ray"/>
    <property type="resolution" value="1.75 A"/>
    <property type="chains" value="B=1-213"/>
</dbReference>
<dbReference type="PDB" id="4DT1">
    <property type="method" value="X-ray"/>
    <property type="resolution" value="1.90 A"/>
    <property type="chains" value="A=1-213"/>
</dbReference>
<dbReference type="PDB" id="4EQ6">
    <property type="method" value="X-ray"/>
    <property type="resolution" value="1.80 A"/>
    <property type="chains" value="A=1-213"/>
</dbReference>
<dbReference type="PDB" id="5XYN">
    <property type="method" value="X-ray"/>
    <property type="resolution" value="3.30 A"/>
    <property type="chains" value="B=1-213"/>
</dbReference>
<dbReference type="PDBsum" id="3VU9"/>
<dbReference type="PDBsum" id="4DT1"/>
<dbReference type="PDBsum" id="4EQ6"/>
<dbReference type="PDBsum" id="5XYN"/>
<dbReference type="SMR" id="P40465"/>
<dbReference type="BioGRID" id="34859">
    <property type="interactions" value="119"/>
</dbReference>
<dbReference type="ComplexPortal" id="CPX-3087">
    <property type="entry name" value="Shu complex"/>
</dbReference>
<dbReference type="DIP" id="DIP-1901N"/>
<dbReference type="FunCoup" id="P40465">
    <property type="interactions" value="38"/>
</dbReference>
<dbReference type="IntAct" id="P40465">
    <property type="interactions" value="6"/>
</dbReference>
<dbReference type="MINT" id="P40465"/>
<dbReference type="STRING" id="4932.YIL132C"/>
<dbReference type="PaxDb" id="4932-YIL132C"/>
<dbReference type="PeptideAtlas" id="P40465"/>
<dbReference type="EnsemblFungi" id="YIL132C_mRNA">
    <property type="protein sequence ID" value="YIL132C"/>
    <property type="gene ID" value="YIL132C"/>
</dbReference>
<dbReference type="GeneID" id="854674"/>
<dbReference type="KEGG" id="sce:YIL132C"/>
<dbReference type="AGR" id="SGD:S000001394"/>
<dbReference type="SGD" id="S000001394">
    <property type="gene designation" value="CSM2"/>
</dbReference>
<dbReference type="VEuPathDB" id="FungiDB:YIL132C"/>
<dbReference type="eggNOG" id="ENOG502S2QF">
    <property type="taxonomic scope" value="Eukaryota"/>
</dbReference>
<dbReference type="HOGENOM" id="CLU_108124_0_0_1"/>
<dbReference type="InParanoid" id="P40465"/>
<dbReference type="OMA" id="WDLITAW"/>
<dbReference type="OrthoDB" id="4067310at2759"/>
<dbReference type="BioCyc" id="YEAST:G3O-31383-MONOMER"/>
<dbReference type="BioGRID-ORCS" id="854674">
    <property type="hits" value="0 hits in 10 CRISPR screens"/>
</dbReference>
<dbReference type="EvolutionaryTrace" id="P40465"/>
<dbReference type="PRO" id="PR:P40465"/>
<dbReference type="Proteomes" id="UP000002311">
    <property type="component" value="Chromosome IX"/>
</dbReference>
<dbReference type="RNAct" id="P40465">
    <property type="molecule type" value="protein"/>
</dbReference>
<dbReference type="GO" id="GO:0005737">
    <property type="term" value="C:cytoplasm"/>
    <property type="evidence" value="ECO:0007005"/>
    <property type="project" value="SGD"/>
</dbReference>
<dbReference type="GO" id="GO:0005634">
    <property type="term" value="C:nucleus"/>
    <property type="evidence" value="ECO:0007005"/>
    <property type="project" value="SGD"/>
</dbReference>
<dbReference type="GO" id="GO:0097196">
    <property type="term" value="C:Shu complex"/>
    <property type="evidence" value="ECO:0000314"/>
    <property type="project" value="SGD"/>
</dbReference>
<dbReference type="GO" id="GO:0035861">
    <property type="term" value="C:site of double-strand break"/>
    <property type="evidence" value="ECO:0000315"/>
    <property type="project" value="SGD"/>
</dbReference>
<dbReference type="GO" id="GO:0000730">
    <property type="term" value="P:DNA recombinase assembly"/>
    <property type="evidence" value="ECO:0000315"/>
    <property type="project" value="SGD"/>
</dbReference>
<dbReference type="GO" id="GO:0042275">
    <property type="term" value="P:error-free postreplication DNA repair"/>
    <property type="evidence" value="ECO:0000303"/>
    <property type="project" value="ComplexPortal"/>
</dbReference>
<dbReference type="GO" id="GO:0043007">
    <property type="term" value="P:maintenance of rDNA"/>
    <property type="evidence" value="ECO:0000316"/>
    <property type="project" value="SGD"/>
</dbReference>
<dbReference type="GO" id="GO:0045132">
    <property type="term" value="P:meiotic chromosome segregation"/>
    <property type="evidence" value="ECO:0000315"/>
    <property type="project" value="SGD"/>
</dbReference>
<dbReference type="GO" id="GO:1903112">
    <property type="term" value="P:positive regulation of single-strand break repair via homologous recombination"/>
    <property type="evidence" value="ECO:0000303"/>
    <property type="project" value="ComplexPortal"/>
</dbReference>
<dbReference type="GO" id="GO:0000725">
    <property type="term" value="P:recombinational repair"/>
    <property type="evidence" value="ECO:0000315"/>
    <property type="project" value="SGD"/>
</dbReference>
<dbReference type="CDD" id="cd19478">
    <property type="entry name" value="Csm2"/>
    <property type="match status" value="1"/>
</dbReference>
<dbReference type="FunFam" id="3.40.50.300:FF:002906">
    <property type="entry name" value="Chromosome segregation in meiosis protein 2"/>
    <property type="match status" value="1"/>
</dbReference>
<dbReference type="Gene3D" id="3.40.50.300">
    <property type="entry name" value="P-loop containing nucleotide triphosphate hydrolases"/>
    <property type="match status" value="1"/>
</dbReference>
<dbReference type="InterPro" id="IPR031783">
    <property type="entry name" value="Csm2"/>
</dbReference>
<dbReference type="InterPro" id="IPR027417">
    <property type="entry name" value="P-loop_NTPase"/>
</dbReference>
<dbReference type="Pfam" id="PF16834">
    <property type="entry name" value="CSM2"/>
    <property type="match status" value="1"/>
</dbReference>
<feature type="chain" id="PRO_0000202960" description="Chromosome segregation in meiosis protein 2">
    <location>
        <begin position="1"/>
        <end position="213"/>
    </location>
</feature>
<feature type="sequence conflict" description="In Ref. 1; AAZ22495." evidence="8" ref="1">
    <original>N</original>
    <variation>D</variation>
    <location>
        <position position="18"/>
    </location>
</feature>
<feature type="helix" evidence="10">
    <location>
        <begin position="3"/>
        <end position="5"/>
    </location>
</feature>
<feature type="strand" evidence="9">
    <location>
        <begin position="8"/>
        <end position="14"/>
    </location>
</feature>
<feature type="helix" evidence="9">
    <location>
        <begin position="17"/>
        <end position="28"/>
    </location>
</feature>
<feature type="strand" evidence="9">
    <location>
        <begin position="33"/>
        <end position="43"/>
    </location>
</feature>
<feature type="helix" evidence="9">
    <location>
        <begin position="48"/>
        <end position="54"/>
    </location>
</feature>
<feature type="helix" evidence="9">
    <location>
        <begin position="60"/>
        <end position="62"/>
    </location>
</feature>
<feature type="helix" evidence="9">
    <location>
        <begin position="63"/>
        <end position="67"/>
    </location>
</feature>
<feature type="strand" evidence="9">
    <location>
        <begin position="69"/>
        <end position="73"/>
    </location>
</feature>
<feature type="helix" evidence="9">
    <location>
        <begin position="77"/>
        <end position="97"/>
    </location>
</feature>
<feature type="strand" evidence="9">
    <location>
        <begin position="110"/>
        <end position="117"/>
    </location>
</feature>
<feature type="helix" evidence="9">
    <location>
        <begin position="119"/>
        <end position="129"/>
    </location>
</feature>
<feature type="helix" evidence="9">
    <location>
        <begin position="132"/>
        <end position="150"/>
    </location>
</feature>
<feature type="strand" evidence="9">
    <location>
        <begin position="155"/>
        <end position="165"/>
    </location>
</feature>
<feature type="helix" evidence="9">
    <location>
        <begin position="167"/>
        <end position="169"/>
    </location>
</feature>
<feature type="helix" evidence="9">
    <location>
        <begin position="171"/>
        <end position="176"/>
    </location>
</feature>
<feature type="strand" evidence="9">
    <location>
        <begin position="195"/>
        <end position="197"/>
    </location>
</feature>
<feature type="helix" evidence="9">
    <location>
        <begin position="199"/>
        <end position="206"/>
    </location>
</feature>
<feature type="strand" evidence="9">
    <location>
        <begin position="209"/>
        <end position="211"/>
    </location>
</feature>
<evidence type="ECO:0000269" key="1">
    <source>
    </source>
</evidence>
<evidence type="ECO:0000269" key="2">
    <source>
    </source>
</evidence>
<evidence type="ECO:0000269" key="3">
    <source>
    </source>
</evidence>
<evidence type="ECO:0000269" key="4">
    <source>
    </source>
</evidence>
<evidence type="ECO:0000269" key="5">
    <source>
    </source>
</evidence>
<evidence type="ECO:0000269" key="6">
    <source>
    </source>
</evidence>
<evidence type="ECO:0000269" key="7">
    <source>
    </source>
</evidence>
<evidence type="ECO:0000305" key="8"/>
<evidence type="ECO:0007829" key="9">
    <source>
        <dbReference type="PDB" id="3VU9"/>
    </source>
</evidence>
<evidence type="ECO:0007829" key="10">
    <source>
        <dbReference type="PDB" id="4EQ6"/>
    </source>
</evidence>
<organism>
    <name type="scientific">Saccharomyces cerevisiae (strain ATCC 204508 / S288c)</name>
    <name type="common">Baker's yeast</name>
    <dbReference type="NCBI Taxonomy" id="559292"/>
    <lineage>
        <taxon>Eukaryota</taxon>
        <taxon>Fungi</taxon>
        <taxon>Dikarya</taxon>
        <taxon>Ascomycota</taxon>
        <taxon>Saccharomycotina</taxon>
        <taxon>Saccharomycetes</taxon>
        <taxon>Saccharomycetales</taxon>
        <taxon>Saccharomycetaceae</taxon>
        <taxon>Saccharomyces</taxon>
    </lineage>
</organism>
<comment type="function">
    <text evidence="1 2 5 6 7">Involved in chromosome segregation during meiosis. Promotes efficient recombinational repair and functions in the protection of the genome from spontaneous and induced DNA damage like mutations and gross chromosomal rearrangements (GCRs).</text>
</comment>
<comment type="subunit">
    <text evidence="6 7">Component of the SHU complex composed of at least CSM2, PSY3, SHU1 and SHU2.</text>
</comment>
<comment type="interaction">
    <interactant intactId="EBI-25229">
        <id>P40465</id>
    </interactant>
    <interactant intactId="EBI-37340">
        <id>Q12318</id>
        <label>PSY3</label>
    </interactant>
    <organismsDiffer>false</organismsDiffer>
    <experiments>4</experiments>
</comment>
<comment type="subcellular location">
    <subcellularLocation>
        <location evidence="3">Cytoplasm</location>
    </subcellularLocation>
    <subcellularLocation>
        <location evidence="3">Nucleus</location>
    </subcellularLocation>
</comment>
<comment type="miscellaneous">
    <text evidence="4">Present with 414 molecules/cell in log phase SD medium.</text>
</comment>
<comment type="similarity">
    <text evidence="8">Belongs to the CSM2 family.</text>
</comment>
<accession>P40465</accession>
<accession>D6VVF5</accession>
<accession>Q45U15</accession>
<keyword id="KW-0002">3D-structure</keyword>
<keyword id="KW-0963">Cytoplasm</keyword>
<keyword id="KW-0227">DNA damage</keyword>
<keyword id="KW-0234">DNA repair</keyword>
<keyword id="KW-0469">Meiosis</keyword>
<keyword id="KW-0539">Nucleus</keyword>
<keyword id="KW-1185">Reference proteome</keyword>
<name>CSM2_YEAST</name>
<reference key="1">
    <citation type="journal article" date="2005" name="Nat. Genet.">
        <title>Quantitative trait loci mapped to single-nucleotide resolution in yeast.</title>
        <authorList>
            <person name="Deutschbauer A.M."/>
            <person name="Davis R.W."/>
        </authorList>
    </citation>
    <scope>NUCLEOTIDE SEQUENCE [GENOMIC DNA]</scope>
    <source>
        <strain>SK1</strain>
    </source>
</reference>
<reference key="2">
    <citation type="journal article" date="1997" name="Nature">
        <title>The nucleotide sequence of Saccharomyces cerevisiae chromosome IX.</title>
        <authorList>
            <person name="Churcher C.M."/>
            <person name="Bowman S."/>
            <person name="Badcock K."/>
            <person name="Bankier A.T."/>
            <person name="Brown D."/>
            <person name="Chillingworth T."/>
            <person name="Connor R."/>
            <person name="Devlin K."/>
            <person name="Gentles S."/>
            <person name="Hamlin N."/>
            <person name="Harris D.E."/>
            <person name="Horsnell T."/>
            <person name="Hunt S."/>
            <person name="Jagels K."/>
            <person name="Jones M."/>
            <person name="Lye G."/>
            <person name="Moule S."/>
            <person name="Odell C."/>
            <person name="Pearson D."/>
            <person name="Rajandream M.A."/>
            <person name="Rice P."/>
            <person name="Rowley N."/>
            <person name="Skelton J."/>
            <person name="Smith V."/>
            <person name="Walsh S.V."/>
            <person name="Whitehead S."/>
            <person name="Barrell B.G."/>
        </authorList>
    </citation>
    <scope>NUCLEOTIDE SEQUENCE [LARGE SCALE GENOMIC DNA]</scope>
    <source>
        <strain>ATCC 204508 / S288c</strain>
    </source>
</reference>
<reference key="3">
    <citation type="journal article" date="2014" name="G3 (Bethesda)">
        <title>The reference genome sequence of Saccharomyces cerevisiae: Then and now.</title>
        <authorList>
            <person name="Engel S.R."/>
            <person name="Dietrich F.S."/>
            <person name="Fisk D.G."/>
            <person name="Binkley G."/>
            <person name="Balakrishnan R."/>
            <person name="Costanzo M.C."/>
            <person name="Dwight S.S."/>
            <person name="Hitz B.C."/>
            <person name="Karra K."/>
            <person name="Nash R.S."/>
            <person name="Weng S."/>
            <person name="Wong E.D."/>
            <person name="Lloyd P."/>
            <person name="Skrzypek M.S."/>
            <person name="Miyasato S.R."/>
            <person name="Simison M."/>
            <person name="Cherry J.M."/>
        </authorList>
    </citation>
    <scope>GENOME REANNOTATION</scope>
    <source>
        <strain>ATCC 204508 / S288c</strain>
    </source>
</reference>
<reference key="4">
    <citation type="journal article" date="2001" name="Curr. Biol.">
        <title>A screen for genes required for meiosis and spore formation based on whole-genome expression.</title>
        <authorList>
            <person name="Rabitsch K.P."/>
            <person name="Toth A."/>
            <person name="Galova M."/>
            <person name="Schleiffer A."/>
            <person name="Schaffner G."/>
            <person name="Aigner E."/>
            <person name="Rupp C."/>
            <person name="Penkner A.M."/>
            <person name="Moreno-Borchart A.C."/>
            <person name="Primig M."/>
            <person name="Esposito R.E."/>
            <person name="Klein F."/>
            <person name="Knop M."/>
            <person name="Nasmyth K."/>
        </authorList>
    </citation>
    <scope>FUNCTION</scope>
</reference>
<reference key="5">
    <citation type="journal article" date="2003" name="Nature">
        <title>Global analysis of protein localization in budding yeast.</title>
        <authorList>
            <person name="Huh W.-K."/>
            <person name="Falvo J.V."/>
            <person name="Gerke L.C."/>
            <person name="Carroll A.S."/>
            <person name="Howson R.W."/>
            <person name="Weissman J.S."/>
            <person name="O'Shea E.K."/>
        </authorList>
    </citation>
    <scope>SUBCELLULAR LOCATION [LARGE SCALE ANALYSIS]</scope>
</reference>
<reference key="6">
    <citation type="journal article" date="2003" name="Nature">
        <title>Global analysis of protein expression in yeast.</title>
        <authorList>
            <person name="Ghaemmaghami S."/>
            <person name="Huh W.-K."/>
            <person name="Bower K."/>
            <person name="Howson R.W."/>
            <person name="Belle A."/>
            <person name="Dephoure N."/>
            <person name="O'Shea E.K."/>
            <person name="Weissman J.S."/>
        </authorList>
    </citation>
    <scope>LEVEL OF PROTEIN EXPRESSION [LARGE SCALE ANALYSIS]</scope>
</reference>
<reference key="7">
    <citation type="journal article" date="2003" name="Proc. Natl. Acad. Sci. U.S.A.">
        <title>A genomewide screen in Saccharomyces cerevisiae for genes that suppress the accumulation of mutations.</title>
        <authorList>
            <person name="Huang M.-E."/>
            <person name="Rio A.-G."/>
            <person name="Nicolas A."/>
            <person name="Kolodner R.D."/>
        </authorList>
    </citation>
    <scope>FUNCTION</scope>
</reference>
<reference key="8">
    <citation type="journal article" date="2004" name="Proc. Natl. Acad. Sci. U.S.A.">
        <title>Mutator genes for suppression of gross chromosomal rearrangements identified by a genome-wide screening in Saccharomyces cerevisiae.</title>
        <authorList>
            <person name="Smith S."/>
            <person name="Hwang J.-Y."/>
            <person name="Banerjee S."/>
            <person name="Majeed A."/>
            <person name="Gupta A."/>
            <person name="Myung K."/>
        </authorList>
    </citation>
    <scope>FUNCTION</scope>
</reference>
<reference key="9">
    <citation type="journal article" date="2005" name="Genetics">
        <title>A genetic screen for top3 suppressors in Saccharomyces cerevisiae identifies SHU1, SHU2, PSY3 and CSM2: four genes involved in error-free DNA repair.</title>
        <authorList>
            <person name="Shor E."/>
            <person name="Weinstein J."/>
            <person name="Rothstein R."/>
        </authorList>
    </citation>
    <scope>IDENTIFICATION IN THE SHU COMPLEX</scope>
    <scope>FUNCTION</scope>
</reference>
<reference key="10">
    <citation type="journal article" date="2009" name="Mol. Microbiol.">
        <title>The yeast Shu complex couples error-free post-replication repair to homologous recombination.</title>
        <authorList>
            <person name="Ball L.G."/>
            <person name="Zhang K."/>
            <person name="Cobb J.A."/>
            <person name="Boone C."/>
            <person name="Xiao W."/>
        </authorList>
    </citation>
    <scope>IDENTIFICATION IN THE SHU COMPLEX</scope>
    <scope>FUNCTION</scope>
</reference>
<gene>
    <name type="primary">CSM2</name>
    <name type="ordered locus">YIL132C</name>
</gene>
<sequence length="213" mass="24953">MEYEDLELITIWPSPTKNKLCQFIKQNLSKEHVVTQLFFIDATSSFPLSQFQKLVPPTLPENVRIYENIRINTCLDLEELSAITVKLLQILSMNKINAQRGTEDAVTEPLKIILYINGLEVMFRNSQFKSSPQRSHELLRDTLLKLRVMGNDENENASIRTLLEFPKEQLLDYYLKKNNNTRTSSVRSKRRRIKNGDSLAEYIWKYYADSLFE</sequence>
<protein>
    <recommendedName>
        <fullName>Chromosome segregation in meiosis protein 2</fullName>
    </recommendedName>
</protein>